<gene>
    <name type="ORF">IIV6-100L</name>
</gene>
<comment type="catalytic activity">
    <reaction evidence="2">
        <text>NAD(+) + (ADP-D-ribosyl)n-acceptor = nicotinamide + (ADP-D-ribosyl)n+1-acceptor + H(+).</text>
        <dbReference type="EC" id="2.4.2.30"/>
    </reaction>
</comment>
<organism>
    <name type="scientific">Invertebrate iridescent virus 6</name>
    <name type="common">IIV-6</name>
    <name type="synonym">Chilo iridescent virus</name>
    <dbReference type="NCBI Taxonomy" id="176652"/>
    <lineage>
        <taxon>Viruses</taxon>
        <taxon>Varidnaviria</taxon>
        <taxon>Bamfordvirae</taxon>
        <taxon>Nucleocytoviricota</taxon>
        <taxon>Megaviricetes</taxon>
        <taxon>Pimascovirales</taxon>
        <taxon>Iridoviridae</taxon>
        <taxon>Betairidovirinae</taxon>
        <taxon>Iridovirus</taxon>
    </lineage>
</organism>
<proteinExistence type="predicted"/>
<keyword id="KW-0328">Glycosyltransferase</keyword>
<keyword id="KW-0520">NAD</keyword>
<keyword id="KW-1185">Reference proteome</keyword>
<keyword id="KW-0808">Transferase</keyword>
<sequence length="181" mass="21163">MDNLKEEETNEINYIIDQLQKLNKKFKIYTVQRFKEEEPFNKYISESVSKKTRLLIHGTRCSSVIPILQTGLKIRPSTSVHFSGKVYGEGNYFSEHVQKSLNYTGWDNDQILLIYEVHVGNEYIYEGWYNGDRGIKLNYNELLQNGYNSTYVKAGNGLQNSEIISYNEDQSKIKYIIHITK</sequence>
<evidence type="ECO:0000255" key="1">
    <source>
        <dbReference type="PROSITE-ProRule" id="PRU00397"/>
    </source>
</evidence>
<evidence type="ECO:0000305" key="2"/>
<name>PARP_IIV6</name>
<reference key="1">
    <citation type="journal article" date="2001" name="Virology">
        <title>Analysis of the first complete DNA sequence of an invertebrate iridovirus: coding strategy of the genome of Chilo iridescent virus.</title>
        <authorList>
            <person name="Jakob N.J."/>
            <person name="Mueller K."/>
            <person name="Bahr U."/>
            <person name="Darai G."/>
        </authorList>
    </citation>
    <scope>NUCLEOTIDE SEQUENCE [LARGE SCALE GENOMIC DNA]</scope>
</reference>
<reference key="2">
    <citation type="journal article" date="2007" name="Virol. J.">
        <title>Comparative genomic analysis of the family Iridoviridae: re-annotating and defining the core set of iridovirus genes.</title>
        <authorList>
            <person name="Eaton H.E."/>
            <person name="Metcalf J."/>
            <person name="Penny E."/>
            <person name="Tcherepanov V."/>
            <person name="Upton C."/>
            <person name="Brunetti C.R."/>
        </authorList>
    </citation>
    <scope>GENOME REANNOTATION</scope>
</reference>
<feature type="chain" id="PRO_0000377910" description="Putative poly [ADP-ribose] polymerase-like 100L">
    <location>
        <begin position="1"/>
        <end position="181"/>
    </location>
</feature>
<feature type="domain" description="PARP catalytic" evidence="1">
    <location>
        <begin position="1"/>
        <end position="181"/>
    </location>
</feature>
<organismHost>
    <name type="scientific">Acheta domesticus</name>
    <name type="common">House cricket</name>
    <dbReference type="NCBI Taxonomy" id="6997"/>
</organismHost>
<organismHost>
    <name type="scientific">Chilo suppressalis</name>
    <name type="common">Asiatic rice borer moth</name>
    <dbReference type="NCBI Taxonomy" id="168631"/>
</organismHost>
<organismHost>
    <name type="scientific">Gryllus bimaculatus</name>
    <name type="common">Two-spotted cricket</name>
    <dbReference type="NCBI Taxonomy" id="6999"/>
</organismHost>
<organismHost>
    <name type="scientific">Gryllus campestris</name>
    <dbReference type="NCBI Taxonomy" id="58607"/>
</organismHost>
<organismHost>
    <name type="scientific">Spodoptera frugiperda</name>
    <name type="common">Fall armyworm</name>
    <dbReference type="NCBI Taxonomy" id="7108"/>
</organismHost>
<dbReference type="EC" id="2.4.2.30"/>
<dbReference type="EMBL" id="AF303741">
    <property type="protein sequence ID" value="AAB94432.1"/>
    <property type="molecule type" value="Genomic_DNA"/>
</dbReference>
<dbReference type="PIR" id="T03058">
    <property type="entry name" value="T03058"/>
</dbReference>
<dbReference type="RefSeq" id="NP_149563.1">
    <property type="nucleotide sequence ID" value="NC_003038.1"/>
</dbReference>
<dbReference type="SMR" id="O55721"/>
<dbReference type="KEGG" id="vg:1733068"/>
<dbReference type="OrthoDB" id="35004at10239"/>
<dbReference type="Proteomes" id="UP000001359">
    <property type="component" value="Genome"/>
</dbReference>
<dbReference type="GO" id="GO:0003950">
    <property type="term" value="F:NAD+ poly-ADP-ribosyltransferase activity"/>
    <property type="evidence" value="ECO:0007669"/>
    <property type="project" value="UniProtKB-EC"/>
</dbReference>
<dbReference type="GO" id="GO:1990404">
    <property type="term" value="F:NAD+-protein mono-ADP-ribosyltransferase activity"/>
    <property type="evidence" value="ECO:0007669"/>
    <property type="project" value="TreeGrafter"/>
</dbReference>
<dbReference type="GO" id="GO:0006302">
    <property type="term" value="P:double-strand break repair"/>
    <property type="evidence" value="ECO:0007669"/>
    <property type="project" value="TreeGrafter"/>
</dbReference>
<dbReference type="GO" id="GO:0070212">
    <property type="term" value="P:protein poly-ADP-ribosylation"/>
    <property type="evidence" value="ECO:0007669"/>
    <property type="project" value="TreeGrafter"/>
</dbReference>
<dbReference type="Gene3D" id="3.90.228.10">
    <property type="match status" value="1"/>
</dbReference>
<dbReference type="InterPro" id="IPR050800">
    <property type="entry name" value="ARTD/PARP"/>
</dbReference>
<dbReference type="InterPro" id="IPR012317">
    <property type="entry name" value="Poly(ADP-ribose)pol_cat_dom"/>
</dbReference>
<dbReference type="PANTHER" id="PTHR10459">
    <property type="entry name" value="DNA LIGASE"/>
    <property type="match status" value="1"/>
</dbReference>
<dbReference type="PANTHER" id="PTHR10459:SF60">
    <property type="entry name" value="POLY [ADP-RIBOSE] POLYMERASE 2"/>
    <property type="match status" value="1"/>
</dbReference>
<dbReference type="Pfam" id="PF00644">
    <property type="entry name" value="PARP"/>
    <property type="match status" value="1"/>
</dbReference>
<dbReference type="SUPFAM" id="SSF56399">
    <property type="entry name" value="ADP-ribosylation"/>
    <property type="match status" value="1"/>
</dbReference>
<dbReference type="PROSITE" id="PS51059">
    <property type="entry name" value="PARP_CATALYTIC"/>
    <property type="match status" value="1"/>
</dbReference>
<accession>O55721</accession>
<protein>
    <recommendedName>
        <fullName>Putative poly [ADP-ribose] polymerase-like 100L</fullName>
        <ecNumber>2.4.2.30</ecNumber>
    </recommendedName>
</protein>